<keyword id="KW-0002">3D-structure</keyword>
<keyword id="KW-0396">Initiation factor</keyword>
<keyword id="KW-0648">Protein biosynthesis</keyword>
<accession>Q9V138</accession>
<accession>G8ZJ56</accession>
<reference key="1">
    <citation type="journal article" date="2003" name="Mol. Microbiol.">
        <title>An integrated analysis of the genome of the hyperthermophilic archaeon Pyrococcus abyssi.</title>
        <authorList>
            <person name="Cohen G.N."/>
            <person name="Barbe V."/>
            <person name="Flament D."/>
            <person name="Galperin M."/>
            <person name="Heilig R."/>
            <person name="Lecompte O."/>
            <person name="Poch O."/>
            <person name="Prieur D."/>
            <person name="Querellou J."/>
            <person name="Ripp R."/>
            <person name="Thierry J.-C."/>
            <person name="Van der Oost J."/>
            <person name="Weissenbach J."/>
            <person name="Zivanovic Y."/>
            <person name="Forterre P."/>
        </authorList>
    </citation>
    <scope>NUCLEOTIDE SEQUENCE [LARGE SCALE GENOMIC DNA]</scope>
    <source>
        <strain>GE5 / Orsay</strain>
    </source>
</reference>
<reference key="2">
    <citation type="journal article" date="2012" name="Curr. Microbiol.">
        <title>Re-annotation of two hyperthermophilic archaea Pyrococcus abyssi GE5 and Pyrococcus furiosus DSM 3638.</title>
        <authorList>
            <person name="Gao J."/>
            <person name="Wang J."/>
        </authorList>
    </citation>
    <scope>GENOME REANNOTATION</scope>
    <source>
        <strain>GE5 / Orsay</strain>
    </source>
</reference>
<name>IF1A_PYRAB</name>
<feature type="chain" id="PRO_0000145128" description="Translation initiation factor 1A">
    <location>
        <begin position="1"/>
        <end position="113"/>
    </location>
</feature>
<feature type="domain" description="S1-like">
    <location>
        <begin position="12"/>
        <end position="87"/>
    </location>
</feature>
<feature type="strand" evidence="3">
    <location>
        <begin position="24"/>
        <end position="33"/>
    </location>
</feature>
<feature type="strand" evidence="3">
    <location>
        <begin position="36"/>
        <end position="41"/>
    </location>
</feature>
<feature type="strand" evidence="3">
    <location>
        <begin position="46"/>
        <end position="50"/>
    </location>
</feature>
<feature type="helix" evidence="3">
    <location>
        <begin position="53"/>
        <end position="56"/>
    </location>
</feature>
<feature type="strand" evidence="3">
    <location>
        <begin position="66"/>
        <end position="71"/>
    </location>
</feature>
<feature type="strand" evidence="3">
    <location>
        <begin position="73"/>
        <end position="75"/>
    </location>
</feature>
<feature type="turn" evidence="3">
    <location>
        <begin position="76"/>
        <end position="78"/>
    </location>
</feature>
<feature type="strand" evidence="3">
    <location>
        <begin position="79"/>
        <end position="85"/>
    </location>
</feature>
<feature type="helix" evidence="3">
    <location>
        <begin position="88"/>
        <end position="96"/>
    </location>
</feature>
<feature type="helix" evidence="3">
    <location>
        <begin position="102"/>
        <end position="106"/>
    </location>
</feature>
<dbReference type="EMBL" id="AJ248284">
    <property type="protein sequence ID" value="CAB49513.1"/>
    <property type="status" value="ALT_INIT"/>
    <property type="molecule type" value="Genomic_DNA"/>
</dbReference>
<dbReference type="EMBL" id="HE613800">
    <property type="protein sequence ID" value="CCE69983.1"/>
    <property type="molecule type" value="Genomic_DNA"/>
</dbReference>
<dbReference type="PIR" id="B75179">
    <property type="entry name" value="B75179"/>
</dbReference>
<dbReference type="RefSeq" id="WP_048146587.1">
    <property type="nucleotide sequence ID" value="NC_000868.1"/>
</dbReference>
<dbReference type="PDB" id="4MNO">
    <property type="method" value="X-ray"/>
    <property type="resolution" value="1.35 A"/>
    <property type="chains" value="A=1-113"/>
</dbReference>
<dbReference type="PDB" id="5JB3">
    <property type="method" value="EM"/>
    <property type="resolution" value="5.34 A"/>
    <property type="chains" value="6=1-113"/>
</dbReference>
<dbReference type="PDB" id="5JBH">
    <property type="method" value="EM"/>
    <property type="resolution" value="5.34 A"/>
    <property type="chains" value="6=1-113"/>
</dbReference>
<dbReference type="PDB" id="6SW9">
    <property type="method" value="EM"/>
    <property type="resolution" value="4.20 A"/>
    <property type="chains" value="6=1-113"/>
</dbReference>
<dbReference type="PDB" id="6SWC">
    <property type="method" value="EM"/>
    <property type="resolution" value="3.30 A"/>
    <property type="chains" value="6=1-113"/>
</dbReference>
<dbReference type="PDB" id="6SWD">
    <property type="method" value="EM"/>
    <property type="resolution" value="3.20 A"/>
    <property type="chains" value="6=1-113"/>
</dbReference>
<dbReference type="PDB" id="6SWE">
    <property type="method" value="EM"/>
    <property type="resolution" value="3.10 A"/>
    <property type="chains" value="6=1-113"/>
</dbReference>
<dbReference type="PDB" id="7ZAG">
    <property type="method" value="EM"/>
    <property type="resolution" value="2.77 A"/>
    <property type="chains" value="6=1-113"/>
</dbReference>
<dbReference type="PDB" id="7ZAH">
    <property type="method" value="EM"/>
    <property type="resolution" value="2.70 A"/>
    <property type="chains" value="6=1-113"/>
</dbReference>
<dbReference type="PDB" id="7ZAI">
    <property type="method" value="EM"/>
    <property type="resolution" value="2.60 A"/>
    <property type="chains" value="6=1-113"/>
</dbReference>
<dbReference type="PDB" id="7ZKI">
    <property type="method" value="EM"/>
    <property type="resolution" value="3.60 A"/>
    <property type="chains" value="6=1-113"/>
</dbReference>
<dbReference type="PDBsum" id="4MNO"/>
<dbReference type="PDBsum" id="5JB3"/>
<dbReference type="PDBsum" id="5JBH"/>
<dbReference type="PDBsum" id="6SW9"/>
<dbReference type="PDBsum" id="6SWC"/>
<dbReference type="PDBsum" id="6SWD"/>
<dbReference type="PDBsum" id="6SWE"/>
<dbReference type="PDBsum" id="7ZAG"/>
<dbReference type="PDBsum" id="7ZAH"/>
<dbReference type="PDBsum" id="7ZAI"/>
<dbReference type="PDBsum" id="7ZKI"/>
<dbReference type="EMDB" id="EMD-10320"/>
<dbReference type="EMDB" id="EMD-10322"/>
<dbReference type="EMDB" id="EMD-10323"/>
<dbReference type="EMDB" id="EMD-10324"/>
<dbReference type="EMDB" id="EMD-14579"/>
<dbReference type="EMDB" id="EMD-14580"/>
<dbReference type="EMDB" id="EMD-14581"/>
<dbReference type="EMDB" id="EMD-14763"/>
<dbReference type="EMDB" id="EMD-8148"/>
<dbReference type="EMDB" id="EMD-8149"/>
<dbReference type="SMR" id="Q9V138"/>
<dbReference type="STRING" id="272844.PAB2441"/>
<dbReference type="KEGG" id="pab:PAB2441"/>
<dbReference type="PATRIC" id="fig|272844.11.peg.629"/>
<dbReference type="eggNOG" id="arCOG01179">
    <property type="taxonomic scope" value="Archaea"/>
</dbReference>
<dbReference type="HOGENOM" id="CLU_109098_1_2_2"/>
<dbReference type="OrthoDB" id="2586at2157"/>
<dbReference type="EvolutionaryTrace" id="Q9V138"/>
<dbReference type="Proteomes" id="UP000000810">
    <property type="component" value="Chromosome"/>
</dbReference>
<dbReference type="Proteomes" id="UP000009139">
    <property type="component" value="Chromosome"/>
</dbReference>
<dbReference type="GO" id="GO:0003723">
    <property type="term" value="F:RNA binding"/>
    <property type="evidence" value="ECO:0007669"/>
    <property type="project" value="InterPro"/>
</dbReference>
<dbReference type="GO" id="GO:0003743">
    <property type="term" value="F:translation initiation factor activity"/>
    <property type="evidence" value="ECO:0007669"/>
    <property type="project" value="UniProtKB-UniRule"/>
</dbReference>
<dbReference type="CDD" id="cd05793">
    <property type="entry name" value="S1_IF1A"/>
    <property type="match status" value="1"/>
</dbReference>
<dbReference type="Gene3D" id="2.40.50.140">
    <property type="entry name" value="Nucleic acid-binding proteins"/>
    <property type="match status" value="1"/>
</dbReference>
<dbReference type="HAMAP" id="MF_00216">
    <property type="entry name" value="aIF_1A"/>
    <property type="match status" value="1"/>
</dbReference>
<dbReference type="InterPro" id="IPR012340">
    <property type="entry name" value="NA-bd_OB-fold"/>
</dbReference>
<dbReference type="InterPro" id="IPR006196">
    <property type="entry name" value="RNA-binding_domain_S1_IF1"/>
</dbReference>
<dbReference type="InterPro" id="IPR001253">
    <property type="entry name" value="TIF_eIF-1A"/>
</dbReference>
<dbReference type="InterPro" id="IPR018104">
    <property type="entry name" value="TIF_eIF-1A_CS"/>
</dbReference>
<dbReference type="NCBIfam" id="TIGR00523">
    <property type="entry name" value="eIF-1A"/>
    <property type="match status" value="1"/>
</dbReference>
<dbReference type="NCBIfam" id="NF003084">
    <property type="entry name" value="PRK04012.1-3"/>
    <property type="match status" value="1"/>
</dbReference>
<dbReference type="NCBIfam" id="NF003085">
    <property type="entry name" value="PRK04012.1-5"/>
    <property type="match status" value="1"/>
</dbReference>
<dbReference type="NCBIfam" id="NF003086">
    <property type="entry name" value="PRK04012.2-2"/>
    <property type="match status" value="1"/>
</dbReference>
<dbReference type="PANTHER" id="PTHR21668">
    <property type="entry name" value="EIF-1A"/>
    <property type="match status" value="1"/>
</dbReference>
<dbReference type="Pfam" id="PF01176">
    <property type="entry name" value="eIF-1a"/>
    <property type="match status" value="1"/>
</dbReference>
<dbReference type="SMART" id="SM00652">
    <property type="entry name" value="eIF1a"/>
    <property type="match status" value="1"/>
</dbReference>
<dbReference type="SUPFAM" id="SSF50249">
    <property type="entry name" value="Nucleic acid-binding proteins"/>
    <property type="match status" value="1"/>
</dbReference>
<dbReference type="PROSITE" id="PS01262">
    <property type="entry name" value="IF1A"/>
    <property type="match status" value="1"/>
</dbReference>
<dbReference type="PROSITE" id="PS50832">
    <property type="entry name" value="S1_IF1_TYPE"/>
    <property type="match status" value="1"/>
</dbReference>
<sequence length="113" mass="13057">MPKKERKVEGDEVIRVPLPEGNQLFGVVEQALGAGWMDVRCEDGKIRRCRIPGKLRRRVWIRVGDLVIVQPWPVQSDKRGDIVYRYTQTQVDWLLRKGKITQEFLTGGSLLVE</sequence>
<organism>
    <name type="scientific">Pyrococcus abyssi (strain GE5 / Orsay)</name>
    <dbReference type="NCBI Taxonomy" id="272844"/>
    <lineage>
        <taxon>Archaea</taxon>
        <taxon>Methanobacteriati</taxon>
        <taxon>Methanobacteriota</taxon>
        <taxon>Thermococci</taxon>
        <taxon>Thermococcales</taxon>
        <taxon>Thermococcaceae</taxon>
        <taxon>Pyrococcus</taxon>
    </lineage>
</organism>
<protein>
    <recommendedName>
        <fullName>Translation initiation factor 1A</fullName>
        <shortName>aIF-1A</shortName>
    </recommendedName>
</protein>
<gene>
    <name type="primary">eIF1A</name>
    <name type="synonym">aif1A</name>
    <name type="ordered locus">PYRAB05910</name>
    <name type="ORF">PAB2441</name>
</gene>
<evidence type="ECO:0000250" key="1"/>
<evidence type="ECO:0000305" key="2"/>
<evidence type="ECO:0007829" key="3">
    <source>
        <dbReference type="PDB" id="4MNO"/>
    </source>
</evidence>
<proteinExistence type="evidence at protein level"/>
<comment type="function">
    <text evidence="1">Seems to be required for maximal rate of protein biosynthesis. Enhances ribosome dissociation into subunits and stabilizes the binding of the initiator Met-tRNA(I) to 40 S ribosomal subunits (By similarity).</text>
</comment>
<comment type="similarity">
    <text evidence="2">Belongs to the eIF-1A family.</text>
</comment>
<comment type="sequence caution" evidence="2">
    <conflict type="erroneous initiation">
        <sequence resource="EMBL-CDS" id="CAB49513"/>
    </conflict>
    <text>Extended N-terminus.</text>
</comment>